<proteinExistence type="inferred from homology"/>
<accession>Q1J8I4</accession>
<feature type="chain" id="PRO_0000263519" description="Elongation factor G">
    <location>
        <begin position="1"/>
        <end position="692"/>
    </location>
</feature>
<feature type="domain" description="tr-type G">
    <location>
        <begin position="8"/>
        <end position="282"/>
    </location>
</feature>
<feature type="binding site" evidence="1">
    <location>
        <begin position="17"/>
        <end position="24"/>
    </location>
    <ligand>
        <name>GTP</name>
        <dbReference type="ChEBI" id="CHEBI:37565"/>
    </ligand>
</feature>
<feature type="binding site" evidence="1">
    <location>
        <begin position="81"/>
        <end position="85"/>
    </location>
    <ligand>
        <name>GTP</name>
        <dbReference type="ChEBI" id="CHEBI:37565"/>
    </ligand>
</feature>
<feature type="binding site" evidence="1">
    <location>
        <begin position="135"/>
        <end position="138"/>
    </location>
    <ligand>
        <name>GTP</name>
        <dbReference type="ChEBI" id="CHEBI:37565"/>
    </ligand>
</feature>
<comment type="function">
    <text evidence="1">Catalyzes the GTP-dependent ribosomal translocation step during translation elongation. During this step, the ribosome changes from the pre-translocational (PRE) to the post-translocational (POST) state as the newly formed A-site-bound peptidyl-tRNA and P-site-bound deacylated tRNA move to the P and E sites, respectively. Catalyzes the coordinated movement of the two tRNA molecules, the mRNA and conformational changes in the ribosome.</text>
</comment>
<comment type="subcellular location">
    <subcellularLocation>
        <location evidence="1">Cytoplasm</location>
    </subcellularLocation>
</comment>
<comment type="similarity">
    <text evidence="1">Belongs to the TRAFAC class translation factor GTPase superfamily. Classic translation factor GTPase family. EF-G/EF-2 subfamily.</text>
</comment>
<keyword id="KW-0963">Cytoplasm</keyword>
<keyword id="KW-0251">Elongation factor</keyword>
<keyword id="KW-0342">GTP-binding</keyword>
<keyword id="KW-0547">Nucleotide-binding</keyword>
<keyword id="KW-0648">Protein biosynthesis</keyword>
<organism>
    <name type="scientific">Streptococcus pyogenes serotype M4 (strain MGAS10750)</name>
    <dbReference type="NCBI Taxonomy" id="370554"/>
    <lineage>
        <taxon>Bacteria</taxon>
        <taxon>Bacillati</taxon>
        <taxon>Bacillota</taxon>
        <taxon>Bacilli</taxon>
        <taxon>Lactobacillales</taxon>
        <taxon>Streptococcaceae</taxon>
        <taxon>Streptococcus</taxon>
    </lineage>
</organism>
<gene>
    <name evidence="1" type="primary">fusA</name>
    <name type="ordered locus">MGAS10750_Spy0227</name>
</gene>
<name>EFG_STRPF</name>
<dbReference type="EMBL" id="CP000262">
    <property type="protein sequence ID" value="ABF37177.1"/>
    <property type="molecule type" value="Genomic_DNA"/>
</dbReference>
<dbReference type="SMR" id="Q1J8I4"/>
<dbReference type="KEGG" id="spi:MGAS10750_Spy0227"/>
<dbReference type="HOGENOM" id="CLU_002794_4_1_9"/>
<dbReference type="Proteomes" id="UP000002434">
    <property type="component" value="Chromosome"/>
</dbReference>
<dbReference type="GO" id="GO:0005737">
    <property type="term" value="C:cytoplasm"/>
    <property type="evidence" value="ECO:0007669"/>
    <property type="project" value="UniProtKB-SubCell"/>
</dbReference>
<dbReference type="GO" id="GO:0005525">
    <property type="term" value="F:GTP binding"/>
    <property type="evidence" value="ECO:0007669"/>
    <property type="project" value="UniProtKB-UniRule"/>
</dbReference>
<dbReference type="GO" id="GO:0003924">
    <property type="term" value="F:GTPase activity"/>
    <property type="evidence" value="ECO:0007669"/>
    <property type="project" value="InterPro"/>
</dbReference>
<dbReference type="GO" id="GO:0003746">
    <property type="term" value="F:translation elongation factor activity"/>
    <property type="evidence" value="ECO:0007669"/>
    <property type="project" value="UniProtKB-UniRule"/>
</dbReference>
<dbReference type="GO" id="GO:0032790">
    <property type="term" value="P:ribosome disassembly"/>
    <property type="evidence" value="ECO:0007669"/>
    <property type="project" value="TreeGrafter"/>
</dbReference>
<dbReference type="CDD" id="cd01886">
    <property type="entry name" value="EF-G"/>
    <property type="match status" value="1"/>
</dbReference>
<dbReference type="CDD" id="cd16262">
    <property type="entry name" value="EFG_III"/>
    <property type="match status" value="1"/>
</dbReference>
<dbReference type="CDD" id="cd01434">
    <property type="entry name" value="EFG_mtEFG1_IV"/>
    <property type="match status" value="1"/>
</dbReference>
<dbReference type="CDD" id="cd03713">
    <property type="entry name" value="EFG_mtEFG_C"/>
    <property type="match status" value="1"/>
</dbReference>
<dbReference type="CDD" id="cd04088">
    <property type="entry name" value="EFG_mtEFG_II"/>
    <property type="match status" value="1"/>
</dbReference>
<dbReference type="FunFam" id="2.40.30.10:FF:000006">
    <property type="entry name" value="Elongation factor G"/>
    <property type="match status" value="1"/>
</dbReference>
<dbReference type="FunFam" id="3.30.230.10:FF:000003">
    <property type="entry name" value="Elongation factor G"/>
    <property type="match status" value="1"/>
</dbReference>
<dbReference type="FunFam" id="3.30.70.240:FF:000001">
    <property type="entry name" value="Elongation factor G"/>
    <property type="match status" value="1"/>
</dbReference>
<dbReference type="FunFam" id="3.30.70.870:FF:000001">
    <property type="entry name" value="Elongation factor G"/>
    <property type="match status" value="1"/>
</dbReference>
<dbReference type="FunFam" id="3.40.50.300:FF:000029">
    <property type="entry name" value="Elongation factor G"/>
    <property type="match status" value="1"/>
</dbReference>
<dbReference type="Gene3D" id="3.30.230.10">
    <property type="match status" value="1"/>
</dbReference>
<dbReference type="Gene3D" id="3.30.70.240">
    <property type="match status" value="1"/>
</dbReference>
<dbReference type="Gene3D" id="3.30.70.870">
    <property type="entry name" value="Elongation Factor G (Translational Gtpase), domain 3"/>
    <property type="match status" value="1"/>
</dbReference>
<dbReference type="Gene3D" id="3.40.50.300">
    <property type="entry name" value="P-loop containing nucleotide triphosphate hydrolases"/>
    <property type="match status" value="1"/>
</dbReference>
<dbReference type="Gene3D" id="2.40.30.10">
    <property type="entry name" value="Translation factors"/>
    <property type="match status" value="1"/>
</dbReference>
<dbReference type="HAMAP" id="MF_00054_B">
    <property type="entry name" value="EF_G_EF_2_B"/>
    <property type="match status" value="1"/>
</dbReference>
<dbReference type="InterPro" id="IPR041095">
    <property type="entry name" value="EFG_II"/>
</dbReference>
<dbReference type="InterPro" id="IPR009022">
    <property type="entry name" value="EFG_III"/>
</dbReference>
<dbReference type="InterPro" id="IPR035647">
    <property type="entry name" value="EFG_III/V"/>
</dbReference>
<dbReference type="InterPro" id="IPR047872">
    <property type="entry name" value="EFG_IV"/>
</dbReference>
<dbReference type="InterPro" id="IPR035649">
    <property type="entry name" value="EFG_V"/>
</dbReference>
<dbReference type="InterPro" id="IPR000640">
    <property type="entry name" value="EFG_V-like"/>
</dbReference>
<dbReference type="InterPro" id="IPR004161">
    <property type="entry name" value="EFTu-like_2"/>
</dbReference>
<dbReference type="InterPro" id="IPR031157">
    <property type="entry name" value="G_TR_CS"/>
</dbReference>
<dbReference type="InterPro" id="IPR027417">
    <property type="entry name" value="P-loop_NTPase"/>
</dbReference>
<dbReference type="InterPro" id="IPR020568">
    <property type="entry name" value="Ribosomal_Su5_D2-typ_SF"/>
</dbReference>
<dbReference type="InterPro" id="IPR014721">
    <property type="entry name" value="Ribsml_uS5_D2-typ_fold_subgr"/>
</dbReference>
<dbReference type="InterPro" id="IPR005225">
    <property type="entry name" value="Small_GTP-bd"/>
</dbReference>
<dbReference type="InterPro" id="IPR000795">
    <property type="entry name" value="T_Tr_GTP-bd_dom"/>
</dbReference>
<dbReference type="InterPro" id="IPR009000">
    <property type="entry name" value="Transl_B-barrel_sf"/>
</dbReference>
<dbReference type="InterPro" id="IPR004540">
    <property type="entry name" value="Transl_elong_EFG/EF2"/>
</dbReference>
<dbReference type="InterPro" id="IPR005517">
    <property type="entry name" value="Transl_elong_EFG/EF2_IV"/>
</dbReference>
<dbReference type="NCBIfam" id="TIGR00484">
    <property type="entry name" value="EF-G"/>
    <property type="match status" value="1"/>
</dbReference>
<dbReference type="NCBIfam" id="NF009379">
    <property type="entry name" value="PRK12740.1-3"/>
    <property type="match status" value="1"/>
</dbReference>
<dbReference type="NCBIfam" id="NF009381">
    <property type="entry name" value="PRK12740.1-5"/>
    <property type="match status" value="1"/>
</dbReference>
<dbReference type="NCBIfam" id="TIGR00231">
    <property type="entry name" value="small_GTP"/>
    <property type="match status" value="1"/>
</dbReference>
<dbReference type="PANTHER" id="PTHR43261:SF1">
    <property type="entry name" value="RIBOSOME-RELEASING FACTOR 2, MITOCHONDRIAL"/>
    <property type="match status" value="1"/>
</dbReference>
<dbReference type="PANTHER" id="PTHR43261">
    <property type="entry name" value="TRANSLATION ELONGATION FACTOR G-RELATED"/>
    <property type="match status" value="1"/>
</dbReference>
<dbReference type="Pfam" id="PF00679">
    <property type="entry name" value="EFG_C"/>
    <property type="match status" value="1"/>
</dbReference>
<dbReference type="Pfam" id="PF14492">
    <property type="entry name" value="EFG_III"/>
    <property type="match status" value="1"/>
</dbReference>
<dbReference type="Pfam" id="PF03764">
    <property type="entry name" value="EFG_IV"/>
    <property type="match status" value="1"/>
</dbReference>
<dbReference type="Pfam" id="PF00009">
    <property type="entry name" value="GTP_EFTU"/>
    <property type="match status" value="1"/>
</dbReference>
<dbReference type="Pfam" id="PF03144">
    <property type="entry name" value="GTP_EFTU_D2"/>
    <property type="match status" value="1"/>
</dbReference>
<dbReference type="PRINTS" id="PR00315">
    <property type="entry name" value="ELONGATNFCT"/>
</dbReference>
<dbReference type="SMART" id="SM00838">
    <property type="entry name" value="EFG_C"/>
    <property type="match status" value="1"/>
</dbReference>
<dbReference type="SMART" id="SM00889">
    <property type="entry name" value="EFG_IV"/>
    <property type="match status" value="1"/>
</dbReference>
<dbReference type="SUPFAM" id="SSF54980">
    <property type="entry name" value="EF-G C-terminal domain-like"/>
    <property type="match status" value="2"/>
</dbReference>
<dbReference type="SUPFAM" id="SSF52540">
    <property type="entry name" value="P-loop containing nucleoside triphosphate hydrolases"/>
    <property type="match status" value="1"/>
</dbReference>
<dbReference type="SUPFAM" id="SSF54211">
    <property type="entry name" value="Ribosomal protein S5 domain 2-like"/>
    <property type="match status" value="1"/>
</dbReference>
<dbReference type="SUPFAM" id="SSF50447">
    <property type="entry name" value="Translation proteins"/>
    <property type="match status" value="1"/>
</dbReference>
<dbReference type="PROSITE" id="PS00301">
    <property type="entry name" value="G_TR_1"/>
    <property type="match status" value="1"/>
</dbReference>
<dbReference type="PROSITE" id="PS51722">
    <property type="entry name" value="G_TR_2"/>
    <property type="match status" value="1"/>
</dbReference>
<reference key="1">
    <citation type="journal article" date="2006" name="Proc. Natl. Acad. Sci. U.S.A.">
        <title>Molecular genetic anatomy of inter- and intraserotype variation in the human bacterial pathogen group A Streptococcus.</title>
        <authorList>
            <person name="Beres S.B."/>
            <person name="Richter E.W."/>
            <person name="Nagiec M.J."/>
            <person name="Sumby P."/>
            <person name="Porcella S.F."/>
            <person name="DeLeo F.R."/>
            <person name="Musser J.M."/>
        </authorList>
    </citation>
    <scope>NUCLEOTIDE SEQUENCE [LARGE SCALE GENOMIC DNA]</scope>
    <source>
        <strain>MGAS10750</strain>
    </source>
</reference>
<protein>
    <recommendedName>
        <fullName evidence="1">Elongation factor G</fullName>
        <shortName evidence="1">EF-G</shortName>
    </recommendedName>
</protein>
<evidence type="ECO:0000255" key="1">
    <source>
        <dbReference type="HAMAP-Rule" id="MF_00054"/>
    </source>
</evidence>
<sequence>MAREFSLAKTRNIGIMAHVDAGKTTTTERILYYTGKIHKIGETHEGASQMDWMEQEQERGITITSAATTAQWDGHRVNIIDTPGHVDFTIEVQRSLRVLDGAVTVLDSQSGVEPQTETVWRQATEYGVPRIVFANKMDKIGADFLYSVQTLHDRLQANAHPIQLPIGAEDDFRGIIDLIKMKAEIYTNDLGTDILEEDIPEEYLEQAQEYREKLIEAVAETDEDLMMKYLEGEEITNDELIAGIRKATINVEFFPVLCGSAFKNKGVQLMLDAVIAYLPSPLDIPAIKGVNPDTDAEEERPASDEEPFAALAFKIMTDPFVGRLTFFRVYSGVLNSGSYVMNTSKGKRERIGRILQMHANSRQEIETVYAGDIAAAVGLKDTTTGDSLTDEKAKVILESIEVPEPVIQLMVEPKSKADQDKMGVALQKLAEEDPTFRVETNVETGETVIAGMGELHLDVLVDRMKREFKVEANVGAPQVSYRETFRASTQARGFFKRQSGGKGQFGDVWIEFTPNEEGKGFEFENAIVGGVVPREFIPAVEKGLIESMANGVLAGYPMVDVKAKLYDGSYHDVDSSETAFKIAASLALKEAAKSAQPAILEPMMLVTITAPEDNLGDVMGHVTARRGRVDGMEAHGNSQIVRAYVPLAEMFGYATVLRSATQGRGTFMMVFDHYEDVPKSVQEEIIKKNKGE</sequence>